<reference key="1">
    <citation type="journal article" date="2006" name="BMC Genomics">
        <title>Complete genome sequence of Shigella flexneri 5b and comparison with Shigella flexneri 2a.</title>
        <authorList>
            <person name="Nie H."/>
            <person name="Yang F."/>
            <person name="Zhang X."/>
            <person name="Yang J."/>
            <person name="Chen L."/>
            <person name="Wang J."/>
            <person name="Xiong Z."/>
            <person name="Peng J."/>
            <person name="Sun L."/>
            <person name="Dong J."/>
            <person name="Xue Y."/>
            <person name="Xu X."/>
            <person name="Chen S."/>
            <person name="Yao Z."/>
            <person name="Shen Y."/>
            <person name="Jin Q."/>
        </authorList>
    </citation>
    <scope>NUCLEOTIDE SEQUENCE [LARGE SCALE GENOMIC DNA]</scope>
    <source>
        <strain>8401</strain>
    </source>
</reference>
<organism>
    <name type="scientific">Shigella flexneri serotype 5b (strain 8401)</name>
    <dbReference type="NCBI Taxonomy" id="373384"/>
    <lineage>
        <taxon>Bacteria</taxon>
        <taxon>Pseudomonadati</taxon>
        <taxon>Pseudomonadota</taxon>
        <taxon>Gammaproteobacteria</taxon>
        <taxon>Enterobacterales</taxon>
        <taxon>Enterobacteriaceae</taxon>
        <taxon>Shigella</taxon>
    </lineage>
</organism>
<accession>Q0SZX8</accession>
<proteinExistence type="inferred from homology"/>
<evidence type="ECO:0000250" key="1"/>
<evidence type="ECO:0000255" key="2">
    <source>
        <dbReference type="HAMAP-Rule" id="MF_00118"/>
    </source>
</evidence>
<dbReference type="EC" id="3.6.5.3" evidence="2"/>
<dbReference type="EMBL" id="CP000266">
    <property type="protein sequence ID" value="ABF05387.1"/>
    <property type="molecule type" value="Genomic_DNA"/>
</dbReference>
<dbReference type="RefSeq" id="WP_000031786.1">
    <property type="nucleotide sequence ID" value="NC_008258.1"/>
</dbReference>
<dbReference type="SMR" id="Q0SZX8"/>
<dbReference type="KEGG" id="sfv:SFV_3344"/>
<dbReference type="HOGENOM" id="CLU_007265_0_2_6"/>
<dbReference type="Proteomes" id="UP000000659">
    <property type="component" value="Chromosome"/>
</dbReference>
<dbReference type="GO" id="GO:0005829">
    <property type="term" value="C:cytosol"/>
    <property type="evidence" value="ECO:0007669"/>
    <property type="project" value="TreeGrafter"/>
</dbReference>
<dbReference type="GO" id="GO:0005525">
    <property type="term" value="F:GTP binding"/>
    <property type="evidence" value="ECO:0007669"/>
    <property type="project" value="UniProtKB-UniRule"/>
</dbReference>
<dbReference type="GO" id="GO:0003924">
    <property type="term" value="F:GTPase activity"/>
    <property type="evidence" value="ECO:0007669"/>
    <property type="project" value="InterPro"/>
</dbReference>
<dbReference type="GO" id="GO:0097216">
    <property type="term" value="F:guanosine tetraphosphate binding"/>
    <property type="evidence" value="ECO:0007669"/>
    <property type="project" value="UniProtKB-ARBA"/>
</dbReference>
<dbReference type="GO" id="GO:0003746">
    <property type="term" value="F:translation elongation factor activity"/>
    <property type="evidence" value="ECO:0007669"/>
    <property type="project" value="UniProtKB-UniRule"/>
</dbReference>
<dbReference type="CDD" id="cd01884">
    <property type="entry name" value="EF_Tu"/>
    <property type="match status" value="1"/>
</dbReference>
<dbReference type="CDD" id="cd03697">
    <property type="entry name" value="EFTU_II"/>
    <property type="match status" value="1"/>
</dbReference>
<dbReference type="CDD" id="cd03707">
    <property type="entry name" value="EFTU_III"/>
    <property type="match status" value="1"/>
</dbReference>
<dbReference type="FunFam" id="2.40.30.10:FF:000001">
    <property type="entry name" value="Elongation factor Tu"/>
    <property type="match status" value="1"/>
</dbReference>
<dbReference type="FunFam" id="3.40.50.300:FF:000003">
    <property type="entry name" value="Elongation factor Tu"/>
    <property type="match status" value="1"/>
</dbReference>
<dbReference type="Gene3D" id="3.40.50.300">
    <property type="entry name" value="P-loop containing nucleotide triphosphate hydrolases"/>
    <property type="match status" value="1"/>
</dbReference>
<dbReference type="Gene3D" id="2.40.30.10">
    <property type="entry name" value="Translation factors"/>
    <property type="match status" value="2"/>
</dbReference>
<dbReference type="HAMAP" id="MF_00118_B">
    <property type="entry name" value="EF_Tu_B"/>
    <property type="match status" value="1"/>
</dbReference>
<dbReference type="InterPro" id="IPR041709">
    <property type="entry name" value="EF-Tu_GTP-bd"/>
</dbReference>
<dbReference type="InterPro" id="IPR050055">
    <property type="entry name" value="EF-Tu_GTPase"/>
</dbReference>
<dbReference type="InterPro" id="IPR004161">
    <property type="entry name" value="EFTu-like_2"/>
</dbReference>
<dbReference type="InterPro" id="IPR033720">
    <property type="entry name" value="EFTU_2"/>
</dbReference>
<dbReference type="InterPro" id="IPR031157">
    <property type="entry name" value="G_TR_CS"/>
</dbReference>
<dbReference type="InterPro" id="IPR027417">
    <property type="entry name" value="P-loop_NTPase"/>
</dbReference>
<dbReference type="InterPro" id="IPR005225">
    <property type="entry name" value="Small_GTP-bd"/>
</dbReference>
<dbReference type="InterPro" id="IPR000795">
    <property type="entry name" value="T_Tr_GTP-bd_dom"/>
</dbReference>
<dbReference type="InterPro" id="IPR009000">
    <property type="entry name" value="Transl_B-barrel_sf"/>
</dbReference>
<dbReference type="InterPro" id="IPR009001">
    <property type="entry name" value="Transl_elong_EF1A/Init_IF2_C"/>
</dbReference>
<dbReference type="InterPro" id="IPR004541">
    <property type="entry name" value="Transl_elong_EFTu/EF1A_bac/org"/>
</dbReference>
<dbReference type="InterPro" id="IPR004160">
    <property type="entry name" value="Transl_elong_EFTu/EF1A_C"/>
</dbReference>
<dbReference type="NCBIfam" id="TIGR00485">
    <property type="entry name" value="EF-Tu"/>
    <property type="match status" value="1"/>
</dbReference>
<dbReference type="NCBIfam" id="NF000766">
    <property type="entry name" value="PRK00049.1"/>
    <property type="match status" value="1"/>
</dbReference>
<dbReference type="NCBIfam" id="NF009372">
    <property type="entry name" value="PRK12735.1"/>
    <property type="match status" value="1"/>
</dbReference>
<dbReference type="NCBIfam" id="NF009373">
    <property type="entry name" value="PRK12736.1"/>
    <property type="match status" value="1"/>
</dbReference>
<dbReference type="NCBIfam" id="TIGR00231">
    <property type="entry name" value="small_GTP"/>
    <property type="match status" value="1"/>
</dbReference>
<dbReference type="PANTHER" id="PTHR43721:SF22">
    <property type="entry name" value="ELONGATION FACTOR TU, MITOCHONDRIAL"/>
    <property type="match status" value="1"/>
</dbReference>
<dbReference type="PANTHER" id="PTHR43721">
    <property type="entry name" value="ELONGATION FACTOR TU-RELATED"/>
    <property type="match status" value="1"/>
</dbReference>
<dbReference type="Pfam" id="PF00009">
    <property type="entry name" value="GTP_EFTU"/>
    <property type="match status" value="1"/>
</dbReference>
<dbReference type="Pfam" id="PF03144">
    <property type="entry name" value="GTP_EFTU_D2"/>
    <property type="match status" value="1"/>
</dbReference>
<dbReference type="Pfam" id="PF03143">
    <property type="entry name" value="GTP_EFTU_D3"/>
    <property type="match status" value="1"/>
</dbReference>
<dbReference type="PRINTS" id="PR00315">
    <property type="entry name" value="ELONGATNFCT"/>
</dbReference>
<dbReference type="SUPFAM" id="SSF50465">
    <property type="entry name" value="EF-Tu/eEF-1alpha/eIF2-gamma C-terminal domain"/>
    <property type="match status" value="1"/>
</dbReference>
<dbReference type="SUPFAM" id="SSF52540">
    <property type="entry name" value="P-loop containing nucleoside triphosphate hydrolases"/>
    <property type="match status" value="1"/>
</dbReference>
<dbReference type="SUPFAM" id="SSF50447">
    <property type="entry name" value="Translation proteins"/>
    <property type="match status" value="1"/>
</dbReference>
<dbReference type="PROSITE" id="PS00301">
    <property type="entry name" value="G_TR_1"/>
    <property type="match status" value="1"/>
</dbReference>
<dbReference type="PROSITE" id="PS51722">
    <property type="entry name" value="G_TR_2"/>
    <property type="match status" value="1"/>
</dbReference>
<name>EFTU1_SHIF8</name>
<feature type="chain" id="PRO_0000337540" description="Elongation factor Tu 1">
    <location>
        <begin position="1"/>
        <end position="394"/>
    </location>
</feature>
<feature type="domain" description="tr-type G">
    <location>
        <begin position="10"/>
        <end position="204"/>
    </location>
</feature>
<feature type="region of interest" description="G1" evidence="1">
    <location>
        <begin position="19"/>
        <end position="26"/>
    </location>
</feature>
<feature type="region of interest" description="G2" evidence="1">
    <location>
        <begin position="60"/>
        <end position="64"/>
    </location>
</feature>
<feature type="region of interest" description="G3" evidence="1">
    <location>
        <begin position="81"/>
        <end position="84"/>
    </location>
</feature>
<feature type="region of interest" description="G4" evidence="1">
    <location>
        <begin position="136"/>
        <end position="139"/>
    </location>
</feature>
<feature type="region of interest" description="G5" evidence="1">
    <location>
        <begin position="174"/>
        <end position="176"/>
    </location>
</feature>
<feature type="binding site" evidence="2">
    <location>
        <begin position="19"/>
        <end position="26"/>
    </location>
    <ligand>
        <name>GTP</name>
        <dbReference type="ChEBI" id="CHEBI:37565"/>
    </ligand>
</feature>
<feature type="binding site" evidence="2">
    <location>
        <position position="26"/>
    </location>
    <ligand>
        <name>Mg(2+)</name>
        <dbReference type="ChEBI" id="CHEBI:18420"/>
    </ligand>
</feature>
<feature type="binding site" evidence="2">
    <location>
        <begin position="81"/>
        <end position="85"/>
    </location>
    <ligand>
        <name>GTP</name>
        <dbReference type="ChEBI" id="CHEBI:37565"/>
    </ligand>
</feature>
<feature type="binding site" evidence="2">
    <location>
        <begin position="136"/>
        <end position="139"/>
    </location>
    <ligand>
        <name>GTP</name>
        <dbReference type="ChEBI" id="CHEBI:37565"/>
    </ligand>
</feature>
<keyword id="KW-0963">Cytoplasm</keyword>
<keyword id="KW-0251">Elongation factor</keyword>
<keyword id="KW-0342">GTP-binding</keyword>
<keyword id="KW-0378">Hydrolase</keyword>
<keyword id="KW-0460">Magnesium</keyword>
<keyword id="KW-0479">Metal-binding</keyword>
<keyword id="KW-0547">Nucleotide-binding</keyword>
<keyword id="KW-0648">Protein biosynthesis</keyword>
<comment type="function">
    <text evidence="2">GTP hydrolase that promotes the GTP-dependent binding of aminoacyl-tRNA to the A-site of ribosomes during protein biosynthesis.</text>
</comment>
<comment type="catalytic activity">
    <reaction evidence="2">
        <text>GTP + H2O = GDP + phosphate + H(+)</text>
        <dbReference type="Rhea" id="RHEA:19669"/>
        <dbReference type="ChEBI" id="CHEBI:15377"/>
        <dbReference type="ChEBI" id="CHEBI:15378"/>
        <dbReference type="ChEBI" id="CHEBI:37565"/>
        <dbReference type="ChEBI" id="CHEBI:43474"/>
        <dbReference type="ChEBI" id="CHEBI:58189"/>
        <dbReference type="EC" id="3.6.5.3"/>
    </reaction>
    <physiologicalReaction direction="left-to-right" evidence="2">
        <dbReference type="Rhea" id="RHEA:19670"/>
    </physiologicalReaction>
</comment>
<comment type="subunit">
    <text evidence="2">Monomer.</text>
</comment>
<comment type="subcellular location">
    <subcellularLocation>
        <location evidence="2">Cytoplasm</location>
    </subcellularLocation>
</comment>
<comment type="similarity">
    <text evidence="2">Belongs to the TRAFAC class translation factor GTPase superfamily. Classic translation factor GTPase family. EF-Tu/EF-1A subfamily.</text>
</comment>
<sequence length="394" mass="43283">MSKEKFERTKPHVNVGTIGHVDHGKTTLTAAITTVLAKTYGGAARAFDQIDNAPEEKARGITINTSHVEYDTPTRHYAHVDCPGHADYVKNMITGAAQMDGAILVVAATDGPMPQTREHILLGRQVGVPYIIVFLNKCDMVDDEELLELVEMEVRELLSQYDFPGDDTPIVRGSALKALEGDAEWEAKILELAGFLDSYIPEPERAIDKPFLLPIEDVFSISGRGTVVTGRVERGIIKVGEEVEIVGIKETQKSTCTGVEMFRKLLDEGRAGENVGVLLRGIKREEIERGQVLAKPGTIKPHTKFESEVYILSKDEGGRHTPFFKGYRPQFYFRTTDVTGTIELPEGVQMVMPGDNIKMVVTLIHPIAMDDGLRFAIREGGRTVGAGVVAKVLG</sequence>
<protein>
    <recommendedName>
        <fullName evidence="2">Elongation factor Tu 1</fullName>
        <shortName evidence="2">EF-Tu 1</shortName>
        <ecNumber evidence="2">3.6.5.3</ecNumber>
    </recommendedName>
</protein>
<gene>
    <name evidence="2" type="primary">tuf1</name>
    <name type="synonym">tufA</name>
    <name type="ordered locus">SFV_3344</name>
</gene>